<reference key="1">
    <citation type="journal article" date="2002" name="Proc. Natl. Acad. Sci. U.S.A.">
        <title>Extensive mosaic structure revealed by the complete genome sequence of uropathogenic Escherichia coli.</title>
        <authorList>
            <person name="Welch R.A."/>
            <person name="Burland V."/>
            <person name="Plunkett G. III"/>
            <person name="Redford P."/>
            <person name="Roesch P."/>
            <person name="Rasko D."/>
            <person name="Buckles E.L."/>
            <person name="Liou S.-R."/>
            <person name="Boutin A."/>
            <person name="Hackett J."/>
            <person name="Stroud D."/>
            <person name="Mayhew G.F."/>
            <person name="Rose D.J."/>
            <person name="Zhou S."/>
            <person name="Schwartz D.C."/>
            <person name="Perna N.T."/>
            <person name="Mobley H.L.T."/>
            <person name="Donnenberg M.S."/>
            <person name="Blattner F.R."/>
        </authorList>
    </citation>
    <scope>NUCLEOTIDE SEQUENCE [LARGE SCALE GENOMIC DNA]</scope>
    <source>
        <strain>CFT073 / ATCC 700928 / UPEC</strain>
    </source>
</reference>
<dbReference type="EMBL" id="AE014075">
    <property type="protein sequence ID" value="AAN81973.1"/>
    <property type="status" value="ALT_INIT"/>
    <property type="molecule type" value="Genomic_DNA"/>
</dbReference>
<dbReference type="RefSeq" id="WP_001297406.1">
    <property type="nucleotide sequence ID" value="NZ_CP051263.1"/>
</dbReference>
<dbReference type="STRING" id="199310.c3525"/>
<dbReference type="GeneID" id="93779056"/>
<dbReference type="KEGG" id="ecc:c3525"/>
<dbReference type="eggNOG" id="ENOG5033JXD">
    <property type="taxonomic scope" value="Bacteria"/>
</dbReference>
<dbReference type="HOGENOM" id="CLU_216465_0_0_6"/>
<dbReference type="Proteomes" id="UP000001410">
    <property type="component" value="Chromosome"/>
</dbReference>
<dbReference type="GO" id="GO:0005737">
    <property type="term" value="C:cytoplasm"/>
    <property type="evidence" value="ECO:0007669"/>
    <property type="project" value="UniProtKB-SubCell"/>
</dbReference>
<dbReference type="InterPro" id="IPR020196">
    <property type="entry name" value="Uncharacterised_YqgB"/>
</dbReference>
<dbReference type="NCBIfam" id="NF033844">
    <property type="entry name" value="small_YqgB"/>
    <property type="match status" value="1"/>
</dbReference>
<dbReference type="Pfam" id="PF11036">
    <property type="entry name" value="YqgB"/>
    <property type="match status" value="1"/>
</dbReference>
<protein>
    <recommendedName>
        <fullName>Uncharacterized protein YqgB</fullName>
    </recommendedName>
</protein>
<organism>
    <name type="scientific">Escherichia coli O6:H1 (strain CFT073 / ATCC 700928 / UPEC)</name>
    <dbReference type="NCBI Taxonomy" id="199310"/>
    <lineage>
        <taxon>Bacteria</taxon>
        <taxon>Pseudomonadati</taxon>
        <taxon>Pseudomonadota</taxon>
        <taxon>Gammaproteobacteria</taxon>
        <taxon>Enterobacterales</taxon>
        <taxon>Enterobacteriaceae</taxon>
        <taxon>Escherichia</taxon>
    </lineage>
</organism>
<evidence type="ECO:0000250" key="1"/>
<evidence type="ECO:0000305" key="2"/>
<comment type="subcellular location">
    <subcellularLocation>
        <location evidence="1">Cytoplasm</location>
    </subcellularLocation>
</comment>
<comment type="similarity">
    <text evidence="2">Belongs to the YqgB family.</text>
</comment>
<comment type="sequence caution" evidence="2">
    <conflict type="erroneous initiation">
        <sequence resource="EMBL-CDS" id="AAN81973"/>
    </conflict>
    <text>Extended N-terminus.</text>
</comment>
<sequence length="43" mass="4859">MKKKPVAQLERQHSLLENPCAYGLLSQFQAAIVVNCFTLNKII</sequence>
<gene>
    <name type="primary">yqgB</name>
    <name type="ordered locus">c3525</name>
</gene>
<feature type="chain" id="PRO_0000169384" description="Uncharacterized protein YqgB">
    <location>
        <begin position="1"/>
        <end position="43"/>
    </location>
</feature>
<name>YQGB_ECOL6</name>
<proteinExistence type="inferred from homology"/>
<keyword id="KW-0963">Cytoplasm</keyword>
<keyword id="KW-1185">Reference proteome</keyword>
<accession>P64568</accession>
<accession>P46877</accession>